<organism>
    <name type="scientific">Methylibium petroleiphilum (strain ATCC BAA-1232 / LMG 22953 / PM1)</name>
    <dbReference type="NCBI Taxonomy" id="420662"/>
    <lineage>
        <taxon>Bacteria</taxon>
        <taxon>Pseudomonadati</taxon>
        <taxon>Pseudomonadota</taxon>
        <taxon>Betaproteobacteria</taxon>
        <taxon>Burkholderiales</taxon>
        <taxon>Sphaerotilaceae</taxon>
        <taxon>Methylibium</taxon>
    </lineage>
</organism>
<proteinExistence type="inferred from homology"/>
<name>RPOA_METPP</name>
<keyword id="KW-0240">DNA-directed RNA polymerase</keyword>
<keyword id="KW-0548">Nucleotidyltransferase</keyword>
<keyword id="KW-1185">Reference proteome</keyword>
<keyword id="KW-0804">Transcription</keyword>
<keyword id="KW-0808">Transferase</keyword>
<sequence>MQTNLLKPKAINVEPLSAAKGAHRAKVTLEPFERGYGHTLGNALRRVLLSSMVGYAPTEVTIAGVLHEYSAIDGVQEDVVHVMLNLKGVVFRLHNRDEVTLVLRKEGEGPVKAGDIQTPHDVEIINPDHVITHLSQGGKLDMQIKVEKGRGYVPGTMRRFGDEPTKSIGRIVLDASFSPVRRVSYTVESARVEQRTDLDKLVMEIETNGAITPEEAIRASAKILVEQLAVFAQLEGQINDIFDAQPAQRSTQFDPILLRPVDELELTVRSANCLKAENIYYIGDLIQRTETELLKTPNLGRKSLNEIKEVLASRGLTLGGRLENWPPQGLDKR</sequence>
<comment type="function">
    <text evidence="1">DNA-dependent RNA polymerase catalyzes the transcription of DNA into RNA using the four ribonucleoside triphosphates as substrates.</text>
</comment>
<comment type="catalytic activity">
    <reaction evidence="1">
        <text>RNA(n) + a ribonucleoside 5'-triphosphate = RNA(n+1) + diphosphate</text>
        <dbReference type="Rhea" id="RHEA:21248"/>
        <dbReference type="Rhea" id="RHEA-COMP:14527"/>
        <dbReference type="Rhea" id="RHEA-COMP:17342"/>
        <dbReference type="ChEBI" id="CHEBI:33019"/>
        <dbReference type="ChEBI" id="CHEBI:61557"/>
        <dbReference type="ChEBI" id="CHEBI:140395"/>
        <dbReference type="EC" id="2.7.7.6"/>
    </reaction>
</comment>
<comment type="subunit">
    <text evidence="1">Homodimer. The RNAP catalytic core consists of 2 alpha, 1 beta, 1 beta' and 1 omega subunit. When a sigma factor is associated with the core the holoenzyme is formed, which can initiate transcription.</text>
</comment>
<comment type="domain">
    <text evidence="1">The N-terminal domain is essential for RNAP assembly and basal transcription, whereas the C-terminal domain is involved in interaction with transcriptional regulators and with upstream promoter elements.</text>
</comment>
<comment type="similarity">
    <text evidence="1">Belongs to the RNA polymerase alpha chain family.</text>
</comment>
<dbReference type="EC" id="2.7.7.6" evidence="1"/>
<dbReference type="EMBL" id="CP000555">
    <property type="protein sequence ID" value="ABM96370.1"/>
    <property type="molecule type" value="Genomic_DNA"/>
</dbReference>
<dbReference type="RefSeq" id="WP_011830991.1">
    <property type="nucleotide sequence ID" value="NC_008825.1"/>
</dbReference>
<dbReference type="SMR" id="A2SLD1"/>
<dbReference type="STRING" id="420662.Mpe_A3417"/>
<dbReference type="KEGG" id="mpt:Mpe_A3417"/>
<dbReference type="eggNOG" id="COG0202">
    <property type="taxonomic scope" value="Bacteria"/>
</dbReference>
<dbReference type="HOGENOM" id="CLU_053084_0_0_4"/>
<dbReference type="Proteomes" id="UP000000366">
    <property type="component" value="Chromosome"/>
</dbReference>
<dbReference type="GO" id="GO:0005737">
    <property type="term" value="C:cytoplasm"/>
    <property type="evidence" value="ECO:0007669"/>
    <property type="project" value="UniProtKB-ARBA"/>
</dbReference>
<dbReference type="GO" id="GO:0000428">
    <property type="term" value="C:DNA-directed RNA polymerase complex"/>
    <property type="evidence" value="ECO:0007669"/>
    <property type="project" value="UniProtKB-KW"/>
</dbReference>
<dbReference type="GO" id="GO:0003677">
    <property type="term" value="F:DNA binding"/>
    <property type="evidence" value="ECO:0007669"/>
    <property type="project" value="UniProtKB-UniRule"/>
</dbReference>
<dbReference type="GO" id="GO:0003899">
    <property type="term" value="F:DNA-directed RNA polymerase activity"/>
    <property type="evidence" value="ECO:0007669"/>
    <property type="project" value="UniProtKB-UniRule"/>
</dbReference>
<dbReference type="GO" id="GO:0046983">
    <property type="term" value="F:protein dimerization activity"/>
    <property type="evidence" value="ECO:0007669"/>
    <property type="project" value="InterPro"/>
</dbReference>
<dbReference type="GO" id="GO:0006351">
    <property type="term" value="P:DNA-templated transcription"/>
    <property type="evidence" value="ECO:0007669"/>
    <property type="project" value="UniProtKB-UniRule"/>
</dbReference>
<dbReference type="CDD" id="cd06928">
    <property type="entry name" value="RNAP_alpha_NTD"/>
    <property type="match status" value="1"/>
</dbReference>
<dbReference type="FunFam" id="1.10.150.20:FF:000001">
    <property type="entry name" value="DNA-directed RNA polymerase subunit alpha"/>
    <property type="match status" value="1"/>
</dbReference>
<dbReference type="FunFam" id="2.170.120.12:FF:000001">
    <property type="entry name" value="DNA-directed RNA polymerase subunit alpha"/>
    <property type="match status" value="1"/>
</dbReference>
<dbReference type="Gene3D" id="1.10.150.20">
    <property type="entry name" value="5' to 3' exonuclease, C-terminal subdomain"/>
    <property type="match status" value="1"/>
</dbReference>
<dbReference type="Gene3D" id="2.170.120.12">
    <property type="entry name" value="DNA-directed RNA polymerase, insert domain"/>
    <property type="match status" value="1"/>
</dbReference>
<dbReference type="Gene3D" id="3.30.1360.10">
    <property type="entry name" value="RNA polymerase, RBP11-like subunit"/>
    <property type="match status" value="1"/>
</dbReference>
<dbReference type="HAMAP" id="MF_00059">
    <property type="entry name" value="RNApol_bact_RpoA"/>
    <property type="match status" value="1"/>
</dbReference>
<dbReference type="InterPro" id="IPR011262">
    <property type="entry name" value="DNA-dir_RNA_pol_insert"/>
</dbReference>
<dbReference type="InterPro" id="IPR011263">
    <property type="entry name" value="DNA-dir_RNA_pol_RpoA/D/Rpb3"/>
</dbReference>
<dbReference type="InterPro" id="IPR011773">
    <property type="entry name" value="DNA-dir_RpoA"/>
</dbReference>
<dbReference type="InterPro" id="IPR036603">
    <property type="entry name" value="RBP11-like"/>
</dbReference>
<dbReference type="InterPro" id="IPR011260">
    <property type="entry name" value="RNAP_asu_C"/>
</dbReference>
<dbReference type="InterPro" id="IPR036643">
    <property type="entry name" value="RNApol_insert_sf"/>
</dbReference>
<dbReference type="NCBIfam" id="NF003513">
    <property type="entry name" value="PRK05182.1-2"/>
    <property type="match status" value="1"/>
</dbReference>
<dbReference type="NCBIfam" id="NF003519">
    <property type="entry name" value="PRK05182.2-5"/>
    <property type="match status" value="1"/>
</dbReference>
<dbReference type="NCBIfam" id="TIGR02027">
    <property type="entry name" value="rpoA"/>
    <property type="match status" value="1"/>
</dbReference>
<dbReference type="Pfam" id="PF01000">
    <property type="entry name" value="RNA_pol_A_bac"/>
    <property type="match status" value="1"/>
</dbReference>
<dbReference type="Pfam" id="PF03118">
    <property type="entry name" value="RNA_pol_A_CTD"/>
    <property type="match status" value="1"/>
</dbReference>
<dbReference type="Pfam" id="PF01193">
    <property type="entry name" value="RNA_pol_L"/>
    <property type="match status" value="1"/>
</dbReference>
<dbReference type="SMART" id="SM00662">
    <property type="entry name" value="RPOLD"/>
    <property type="match status" value="1"/>
</dbReference>
<dbReference type="SUPFAM" id="SSF47789">
    <property type="entry name" value="C-terminal domain of RNA polymerase alpha subunit"/>
    <property type="match status" value="1"/>
</dbReference>
<dbReference type="SUPFAM" id="SSF56553">
    <property type="entry name" value="Insert subdomain of RNA polymerase alpha subunit"/>
    <property type="match status" value="1"/>
</dbReference>
<dbReference type="SUPFAM" id="SSF55257">
    <property type="entry name" value="RBP11-like subunits of RNA polymerase"/>
    <property type="match status" value="1"/>
</dbReference>
<reference key="1">
    <citation type="journal article" date="2007" name="J. Bacteriol.">
        <title>Whole-genome analysis of the methyl tert-butyl ether-degrading beta-proteobacterium Methylibium petroleiphilum PM1.</title>
        <authorList>
            <person name="Kane S.R."/>
            <person name="Chakicherla A.Y."/>
            <person name="Chain P.S.G."/>
            <person name="Schmidt R."/>
            <person name="Shin M.W."/>
            <person name="Legler T.C."/>
            <person name="Scow K.M."/>
            <person name="Larimer F.W."/>
            <person name="Lucas S.M."/>
            <person name="Richardson P.M."/>
            <person name="Hristova K.R."/>
        </authorList>
    </citation>
    <scope>NUCLEOTIDE SEQUENCE [LARGE SCALE GENOMIC DNA]</scope>
    <source>
        <strain>ATCC BAA-1232 / LMG 22953 / PM1</strain>
    </source>
</reference>
<evidence type="ECO:0000255" key="1">
    <source>
        <dbReference type="HAMAP-Rule" id="MF_00059"/>
    </source>
</evidence>
<protein>
    <recommendedName>
        <fullName evidence="1">DNA-directed RNA polymerase subunit alpha</fullName>
        <shortName evidence="1">RNAP subunit alpha</shortName>
        <ecNumber evidence="1">2.7.7.6</ecNumber>
    </recommendedName>
    <alternativeName>
        <fullName evidence="1">RNA polymerase subunit alpha</fullName>
    </alternativeName>
    <alternativeName>
        <fullName evidence="1">Transcriptase subunit alpha</fullName>
    </alternativeName>
</protein>
<accession>A2SLD1</accession>
<gene>
    <name evidence="1" type="primary">rpoA</name>
    <name type="ordered locus">Mpe_A3417</name>
</gene>
<feature type="chain" id="PRO_0000296832" description="DNA-directed RNA polymerase subunit alpha">
    <location>
        <begin position="1"/>
        <end position="333"/>
    </location>
</feature>
<feature type="region of interest" description="Alpha N-terminal domain (alpha-NTD)" evidence="1">
    <location>
        <begin position="1"/>
        <end position="235"/>
    </location>
</feature>
<feature type="region of interest" description="Alpha C-terminal domain (alpha-CTD)" evidence="1">
    <location>
        <begin position="253"/>
        <end position="333"/>
    </location>
</feature>